<keyword id="KW-0488">Methylation</keyword>
<keyword id="KW-0597">Phosphoprotein</keyword>
<keyword id="KW-1185">Reference proteome</keyword>
<gene>
    <name type="primary">BTF3L4</name>
</gene>
<protein>
    <recommendedName>
        <fullName>Transcription factor BTF3 homolog 4</fullName>
    </recommendedName>
    <alternativeName>
        <fullName>Basic transcription factor 3-like 4</fullName>
    </alternativeName>
</protein>
<accession>Q2KIY7</accession>
<organism>
    <name type="scientific">Bos taurus</name>
    <name type="common">Bovine</name>
    <dbReference type="NCBI Taxonomy" id="9913"/>
    <lineage>
        <taxon>Eukaryota</taxon>
        <taxon>Metazoa</taxon>
        <taxon>Chordata</taxon>
        <taxon>Craniata</taxon>
        <taxon>Vertebrata</taxon>
        <taxon>Euteleostomi</taxon>
        <taxon>Mammalia</taxon>
        <taxon>Eutheria</taxon>
        <taxon>Laurasiatheria</taxon>
        <taxon>Artiodactyla</taxon>
        <taxon>Ruminantia</taxon>
        <taxon>Pecora</taxon>
        <taxon>Bovidae</taxon>
        <taxon>Bovinae</taxon>
        <taxon>Bos</taxon>
    </lineage>
</organism>
<proteinExistence type="evidence at transcript level"/>
<feature type="chain" id="PRO_0000307380" description="Transcription factor BTF3 homolog 4">
    <location>
        <begin position="1"/>
        <end position="158"/>
    </location>
</feature>
<feature type="domain" description="NAC-A/B" evidence="2">
    <location>
        <begin position="33"/>
        <end position="98"/>
    </location>
</feature>
<feature type="region of interest" description="Disordered" evidence="3">
    <location>
        <begin position="123"/>
        <end position="158"/>
    </location>
</feature>
<feature type="compositionally biased region" description="Acidic residues" evidence="3">
    <location>
        <begin position="134"/>
        <end position="150"/>
    </location>
</feature>
<feature type="modified residue" description="N6-methyllysine" evidence="1">
    <location>
        <position position="5"/>
    </location>
</feature>
<feature type="modified residue" description="Phosphothreonine" evidence="1">
    <location>
        <position position="111"/>
    </location>
</feature>
<evidence type="ECO:0000250" key="1">
    <source>
        <dbReference type="UniProtKB" id="P20290"/>
    </source>
</evidence>
<evidence type="ECO:0000255" key="2">
    <source>
        <dbReference type="PROSITE-ProRule" id="PRU00507"/>
    </source>
</evidence>
<evidence type="ECO:0000256" key="3">
    <source>
        <dbReference type="SAM" id="MobiDB-lite"/>
    </source>
</evidence>
<evidence type="ECO:0000305" key="4"/>
<comment type="similarity">
    <text evidence="4">Belongs to the NAC-beta family.</text>
</comment>
<sequence length="158" mass="17315">MNQEKLAKLQAQVRIGGKGTARRKKKVVHRTATADDKKLQSSLKKLAVNNIAGIEEVNMIKDDGTVIHFNNPKVQASLSANTFAITGHAEAKPITEMLPGILSQLGADSLTSLRKLAEQFPRQVLDSKTPKPEDIDEEEDDVPDLVENFDEASKNEAN</sequence>
<dbReference type="EMBL" id="BC112459">
    <property type="protein sequence ID" value="AAI12460.1"/>
    <property type="molecule type" value="mRNA"/>
</dbReference>
<dbReference type="RefSeq" id="NP_001091575.1">
    <property type="nucleotide sequence ID" value="NM_001098106.2"/>
</dbReference>
<dbReference type="RefSeq" id="XP_059740780.1">
    <property type="nucleotide sequence ID" value="XM_059884797.1"/>
</dbReference>
<dbReference type="SMR" id="Q2KIY7"/>
<dbReference type="FunCoup" id="Q2KIY7">
    <property type="interactions" value="3580"/>
</dbReference>
<dbReference type="STRING" id="9913.ENSBTAP00000014646"/>
<dbReference type="PaxDb" id="9913-ENSBTAP00000055850"/>
<dbReference type="PeptideAtlas" id="Q2KIY7"/>
<dbReference type="GeneID" id="539753"/>
<dbReference type="KEGG" id="bta:539753"/>
<dbReference type="CTD" id="91408"/>
<dbReference type="eggNOG" id="KOG2240">
    <property type="taxonomic scope" value="Eukaryota"/>
</dbReference>
<dbReference type="HOGENOM" id="CLU_098726_3_0_1"/>
<dbReference type="InParanoid" id="Q2KIY7"/>
<dbReference type="OrthoDB" id="8033832at2759"/>
<dbReference type="Proteomes" id="UP000009136">
    <property type="component" value="Unplaced"/>
</dbReference>
<dbReference type="CDD" id="cd22055">
    <property type="entry name" value="NAC_BTF3"/>
    <property type="match status" value="1"/>
</dbReference>
<dbReference type="FunFam" id="2.20.70.30:FF:000001">
    <property type="entry name" value="Transcription factor BTF3 homolog"/>
    <property type="match status" value="1"/>
</dbReference>
<dbReference type="Gene3D" id="2.20.70.30">
    <property type="entry name" value="Nascent polypeptide-associated complex domain"/>
    <property type="match status" value="1"/>
</dbReference>
<dbReference type="InterPro" id="IPR039370">
    <property type="entry name" value="BTF3"/>
</dbReference>
<dbReference type="InterPro" id="IPR038187">
    <property type="entry name" value="NAC_A/B_dom_sf"/>
</dbReference>
<dbReference type="InterPro" id="IPR002715">
    <property type="entry name" value="Nas_poly-pep-assoc_cplx_dom"/>
</dbReference>
<dbReference type="PANTHER" id="PTHR10351">
    <property type="entry name" value="TRANSCRIPTION FACTOR BTF3 FAMILY MEMBER"/>
    <property type="match status" value="1"/>
</dbReference>
<dbReference type="Pfam" id="PF01849">
    <property type="entry name" value="NAC"/>
    <property type="match status" value="1"/>
</dbReference>
<dbReference type="SMART" id="SM01407">
    <property type="entry name" value="NAC"/>
    <property type="match status" value="1"/>
</dbReference>
<dbReference type="PROSITE" id="PS51151">
    <property type="entry name" value="NAC_AB"/>
    <property type="match status" value="1"/>
</dbReference>
<reference key="1">
    <citation type="submission" date="2006-01" db="EMBL/GenBank/DDBJ databases">
        <authorList>
            <consortium name="NIH - Mammalian Gene Collection (MGC) project"/>
        </authorList>
    </citation>
    <scope>NUCLEOTIDE SEQUENCE [LARGE SCALE MRNA]</scope>
    <source>
        <strain>Crossbred X Angus</strain>
        <tissue>Liver</tissue>
    </source>
</reference>
<name>BT3L4_BOVIN</name>